<proteinExistence type="predicted"/>
<evidence type="ECO:0000305" key="1"/>
<protein>
    <recommendedName>
        <fullName>Probable membrane antigen 3</fullName>
    </recommendedName>
    <alternativeName>
        <fullName>Tegument protein</fullName>
    </alternativeName>
</protein>
<sequence length="1319" mass="141568">MDSTSKRSSFKRARGGRATVYFYVPTWQHGPGGQPPVSSFAFSLVNEVGFGVLFDYGCAGTGGATAGRAAAAVDPGVASEAFMEILRTVLPGHRVGAVSELPAGLGSYLTSGDDGAGGPCTLSRDVAPMMQALLEHLIRGQQQLRRPLVGDAGEGAGRGPGEGEATTPIPKILAVSFFHTLWSLHSIKQHHAYMLCNQLSSPASFCRTPGYLGFTPLGDPGERPDLKFARVPVPALAHPKADALAKLPEMFREHDSDVLTGTHRGAIKIRNPFNGLLGYLCRLYAPTSRVFIDRDVFSSNGKPDYFGVVYQVGGISTGASELDLLYSEAGTFGWGNVLGLHLGVVGSGEDPFALQEYLESHMLAQRCSGAPTLLGFVRVMDGSAAPPGMGPASRPHSFTGATRASIISPKACLSPVRGGGASVFMLGDFFQRPQRAGGAYASHDSGRRLASILAAVQTFINVAGGRAVLSTCQSRLEGTMHAKIAAACGVMGLKTYTSLLPEEAVSELSHFSPGNASMNRSILLSKFLNVEAQVVLLTVVNTPRNRQILEGVFKTFGCRVSLLGHLARAKKIVLYDDRSPDYCQGGPRYLCFKMHKPRYALPIDRWCGTASYRPTAPSRVPYNSSDAGPPSDAREVLLGILRHPTVGCKNYIVKHVDRCASGRVAQQCGVGPLDLPVADYSMVVVEPSAGPPSSMEPWTWETPQVPDDCFLIHEDGVSGVCSALGEKNSVFPFYPEAGAKMAIAESVLSLALAPIARIEDVTVNLSLAWPHLKGAQGEVFTLLTRCKRFCEDAGVSCNVTSCASSRRAGGGDPPEGGADIKSFVASAFAYTPCAFWKLTPDLKEARSVILFLPASPGKHAFASVYQQVRGQKKYTGSPVNISGAYLGKLARAVLHLRAKRLAVSGHDVGDGGLWAALAEMAMAGMRSLDVEVPVRLDGDPMGFLTSETPGVALEVPLSSASAAVEYLRSKYILCYRVGVTGHKTCERMFRITRGDQVLLECEQEEVGEAWRSHSVRMERYGPCFNRHAYGEGPYEREREAFLAYTPFRILNRPNKKHRVAVLLLPGCPYPLAALDALRDSGFDALAVSHLDLAHVLTDEVCGLFVAGVDNTSDTKTSDALTSALVHSRNPGVIRDFLSRKDTFSLGVGSMACRILFDGDMAVSPALQSRDIRCVPAVSCKFESRWLNVFINQSTPAVAFRTLRGSLLPCWAQGTHLGFGAPSPECLDRLVASGQAASMFYGSDVASGPAMAYPANPTETLPVAGICSRDGRHLVLLHDITASYYLWQWPHVPKSNIPIAVSPWKQVFYDLHAWVTAHSH</sequence>
<comment type="subcellular location">
    <subcellularLocation>
        <location evidence="1">Virion tegument</location>
    </subcellularLocation>
</comment>
<organism>
    <name type="scientific">Equine herpesvirus 2 (strain 86/87)</name>
    <name type="common">EHV-2</name>
    <dbReference type="NCBI Taxonomy" id="82831"/>
    <lineage>
        <taxon>Viruses</taxon>
        <taxon>Duplodnaviria</taxon>
        <taxon>Heunggongvirae</taxon>
        <taxon>Peploviricota</taxon>
        <taxon>Herviviricetes</taxon>
        <taxon>Herpesvirales</taxon>
        <taxon>Orthoherpesviridae</taxon>
        <taxon>Gammaherpesvirinae</taxon>
        <taxon>Percavirus</taxon>
        <taxon>Percavirus equidgamma2</taxon>
        <taxon>Equid gammaherpesvirus 2</taxon>
    </lineage>
</organism>
<dbReference type="EMBL" id="U20824">
    <property type="protein sequence ID" value="AAC13791.1"/>
    <property type="molecule type" value="Genomic_DNA"/>
</dbReference>
<dbReference type="PIR" id="S55598">
    <property type="entry name" value="S55598"/>
</dbReference>
<dbReference type="SMR" id="Q66609"/>
<dbReference type="KEGG" id="vg:1461051"/>
<dbReference type="Proteomes" id="UP000007083">
    <property type="component" value="Segment"/>
</dbReference>
<dbReference type="GO" id="GO:0019033">
    <property type="term" value="C:viral tegument"/>
    <property type="evidence" value="ECO:0007669"/>
    <property type="project" value="UniProtKB-SubCell"/>
</dbReference>
<dbReference type="GO" id="GO:0004642">
    <property type="term" value="F:phosphoribosylformylglycinamidine synthase activity"/>
    <property type="evidence" value="ECO:0007669"/>
    <property type="project" value="TreeGrafter"/>
</dbReference>
<dbReference type="GO" id="GO:0006164">
    <property type="term" value="P:purine nucleotide biosynthetic process"/>
    <property type="evidence" value="ECO:0007669"/>
    <property type="project" value="TreeGrafter"/>
</dbReference>
<dbReference type="Gene3D" id="3.40.50.880">
    <property type="match status" value="1"/>
</dbReference>
<dbReference type="Gene3D" id="3.90.650.10">
    <property type="entry name" value="PurM-like C-terminal domain"/>
    <property type="match status" value="1"/>
</dbReference>
<dbReference type="Gene3D" id="3.30.1330.10">
    <property type="entry name" value="PurM-like, N-terminal domain"/>
    <property type="match status" value="1"/>
</dbReference>
<dbReference type="InterPro" id="IPR029062">
    <property type="entry name" value="Class_I_gatase-like"/>
</dbReference>
<dbReference type="InterPro" id="IPR055181">
    <property type="entry name" value="FGAR-AT_PurM_N-like"/>
</dbReference>
<dbReference type="InterPro" id="IPR010918">
    <property type="entry name" value="PurM-like_C_dom"/>
</dbReference>
<dbReference type="InterPro" id="IPR036676">
    <property type="entry name" value="PurM-like_C_sf"/>
</dbReference>
<dbReference type="InterPro" id="IPR036921">
    <property type="entry name" value="PurM-like_N_sf"/>
</dbReference>
<dbReference type="InterPro" id="IPR024346">
    <property type="entry name" value="Tegument_herpes_virus_N"/>
</dbReference>
<dbReference type="PANTHER" id="PTHR10099">
    <property type="entry name" value="PHOSPHORIBOSYLFORMYLGLYCINAMIDINE SYNTHASE"/>
    <property type="match status" value="1"/>
</dbReference>
<dbReference type="PANTHER" id="PTHR10099:SF1">
    <property type="entry name" value="PHOSPHORIBOSYLFORMYLGLYCINAMIDINE SYNTHASE"/>
    <property type="match status" value="1"/>
</dbReference>
<dbReference type="Pfam" id="PF02769">
    <property type="entry name" value="AIRS_C"/>
    <property type="match status" value="1"/>
</dbReference>
<dbReference type="Pfam" id="PF22689">
    <property type="entry name" value="FGAR-AT_PurM_N-like"/>
    <property type="match status" value="1"/>
</dbReference>
<dbReference type="Pfam" id="PF13507">
    <property type="entry name" value="GATase_5"/>
    <property type="match status" value="1"/>
</dbReference>
<dbReference type="Pfam" id="PF12818">
    <property type="entry name" value="Tegument_dsDNA"/>
    <property type="match status" value="1"/>
</dbReference>
<dbReference type="SMART" id="SM01211">
    <property type="entry name" value="GATase_5"/>
    <property type="match status" value="1"/>
</dbReference>
<dbReference type="SUPFAM" id="SSF52317">
    <property type="entry name" value="Class I glutamine amidotransferase-like"/>
    <property type="match status" value="1"/>
</dbReference>
<dbReference type="SUPFAM" id="SSF56042">
    <property type="entry name" value="PurM C-terminal domain-like"/>
    <property type="match status" value="1"/>
</dbReference>
<dbReference type="SUPFAM" id="SSF55326">
    <property type="entry name" value="PurM N-terminal domain-like"/>
    <property type="match status" value="1"/>
</dbReference>
<gene>
    <name type="primary">3</name>
</gene>
<organismHost>
    <name type="scientific">Equus caballus</name>
    <name type="common">Horse</name>
    <dbReference type="NCBI Taxonomy" id="9796"/>
</organismHost>
<accession>Q66609</accession>
<reference key="1">
    <citation type="journal article" date="1995" name="J. Mol. Biol.">
        <title>The DNA sequence of equine herpesvirus 2.</title>
        <authorList>
            <person name="Telford E.A.R."/>
            <person name="Watson M.S."/>
            <person name="Aird H.C."/>
            <person name="Perry J."/>
            <person name="Davison A.J."/>
        </authorList>
    </citation>
    <scope>NUCLEOTIDE SEQUENCE [LARGE SCALE GENOMIC DNA]</scope>
</reference>
<name>VP03_EHV2</name>
<feature type="chain" id="PRO_0000406171" description="Probable membrane antigen 3">
    <location>
        <begin position="1"/>
        <end position="1319"/>
    </location>
</feature>
<keyword id="KW-1185">Reference proteome</keyword>
<keyword id="KW-0946">Virion</keyword>
<keyword id="KW-0920">Virion tegument</keyword>